<accession>C3KUA1</accession>
<protein>
    <recommendedName>
        <fullName evidence="1">DNA ligase</fullName>
        <ecNumber evidence="1">6.5.1.2</ecNumber>
    </recommendedName>
    <alternativeName>
        <fullName evidence="1">Polydeoxyribonucleotide synthase [NAD(+)]</fullName>
    </alternativeName>
</protein>
<proteinExistence type="inferred from homology"/>
<organism>
    <name type="scientific">Clostridium botulinum (strain 657 / Type Ba4)</name>
    <dbReference type="NCBI Taxonomy" id="515621"/>
    <lineage>
        <taxon>Bacteria</taxon>
        <taxon>Bacillati</taxon>
        <taxon>Bacillota</taxon>
        <taxon>Clostridia</taxon>
        <taxon>Eubacteriales</taxon>
        <taxon>Clostridiaceae</taxon>
        <taxon>Clostridium</taxon>
    </lineage>
</organism>
<keyword id="KW-0227">DNA damage</keyword>
<keyword id="KW-0234">DNA repair</keyword>
<keyword id="KW-0235">DNA replication</keyword>
<keyword id="KW-0436">Ligase</keyword>
<keyword id="KW-0460">Magnesium</keyword>
<keyword id="KW-0464">Manganese</keyword>
<keyword id="KW-0479">Metal-binding</keyword>
<keyword id="KW-0520">NAD</keyword>
<keyword id="KW-0862">Zinc</keyword>
<dbReference type="EC" id="6.5.1.2" evidence="1"/>
<dbReference type="EMBL" id="CP001083">
    <property type="protein sequence ID" value="ACQ54389.1"/>
    <property type="molecule type" value="Genomic_DNA"/>
</dbReference>
<dbReference type="RefSeq" id="WP_003361679.1">
    <property type="nucleotide sequence ID" value="NC_012658.1"/>
</dbReference>
<dbReference type="SMR" id="C3KUA1"/>
<dbReference type="KEGG" id="cbi:CLJ_B3551"/>
<dbReference type="HOGENOM" id="CLU_007764_2_1_9"/>
<dbReference type="Proteomes" id="UP000002333">
    <property type="component" value="Chromosome"/>
</dbReference>
<dbReference type="GO" id="GO:0005829">
    <property type="term" value="C:cytosol"/>
    <property type="evidence" value="ECO:0007669"/>
    <property type="project" value="TreeGrafter"/>
</dbReference>
<dbReference type="GO" id="GO:0003677">
    <property type="term" value="F:DNA binding"/>
    <property type="evidence" value="ECO:0007669"/>
    <property type="project" value="InterPro"/>
</dbReference>
<dbReference type="GO" id="GO:0003911">
    <property type="term" value="F:DNA ligase (NAD+) activity"/>
    <property type="evidence" value="ECO:0007669"/>
    <property type="project" value="UniProtKB-UniRule"/>
</dbReference>
<dbReference type="GO" id="GO:0046872">
    <property type="term" value="F:metal ion binding"/>
    <property type="evidence" value="ECO:0007669"/>
    <property type="project" value="UniProtKB-KW"/>
</dbReference>
<dbReference type="GO" id="GO:0006281">
    <property type="term" value="P:DNA repair"/>
    <property type="evidence" value="ECO:0007669"/>
    <property type="project" value="UniProtKB-KW"/>
</dbReference>
<dbReference type="GO" id="GO:0006260">
    <property type="term" value="P:DNA replication"/>
    <property type="evidence" value="ECO:0007669"/>
    <property type="project" value="UniProtKB-KW"/>
</dbReference>
<dbReference type="CDD" id="cd17748">
    <property type="entry name" value="BRCT_DNA_ligase_like"/>
    <property type="match status" value="1"/>
</dbReference>
<dbReference type="CDD" id="cd09897">
    <property type="entry name" value="H3TH_FEN1-XPG-like"/>
    <property type="match status" value="1"/>
</dbReference>
<dbReference type="CDD" id="cd00114">
    <property type="entry name" value="LIGANc"/>
    <property type="match status" value="1"/>
</dbReference>
<dbReference type="FunFam" id="1.10.150.20:FF:000006">
    <property type="entry name" value="DNA ligase"/>
    <property type="match status" value="1"/>
</dbReference>
<dbReference type="FunFam" id="1.10.150.20:FF:000007">
    <property type="entry name" value="DNA ligase"/>
    <property type="match status" value="1"/>
</dbReference>
<dbReference type="FunFam" id="2.40.50.140:FF:000012">
    <property type="entry name" value="DNA ligase"/>
    <property type="match status" value="1"/>
</dbReference>
<dbReference type="FunFam" id="3.30.470.30:FF:000030">
    <property type="entry name" value="DNA ligase"/>
    <property type="match status" value="1"/>
</dbReference>
<dbReference type="FunFam" id="3.40.50.10190:FF:000054">
    <property type="entry name" value="DNA ligase"/>
    <property type="match status" value="1"/>
</dbReference>
<dbReference type="Gene3D" id="1.10.150.20">
    <property type="entry name" value="5' to 3' exonuclease, C-terminal subdomain"/>
    <property type="match status" value="2"/>
</dbReference>
<dbReference type="Gene3D" id="3.40.50.10190">
    <property type="entry name" value="BRCT domain"/>
    <property type="match status" value="1"/>
</dbReference>
<dbReference type="Gene3D" id="3.30.470.30">
    <property type="entry name" value="DNA ligase/mRNA capping enzyme"/>
    <property type="match status" value="1"/>
</dbReference>
<dbReference type="Gene3D" id="1.10.287.610">
    <property type="entry name" value="Helix hairpin bin"/>
    <property type="match status" value="1"/>
</dbReference>
<dbReference type="Gene3D" id="2.40.50.140">
    <property type="entry name" value="Nucleic acid-binding proteins"/>
    <property type="match status" value="1"/>
</dbReference>
<dbReference type="HAMAP" id="MF_01588">
    <property type="entry name" value="DNA_ligase_A"/>
    <property type="match status" value="1"/>
</dbReference>
<dbReference type="InterPro" id="IPR001357">
    <property type="entry name" value="BRCT_dom"/>
</dbReference>
<dbReference type="InterPro" id="IPR036420">
    <property type="entry name" value="BRCT_dom_sf"/>
</dbReference>
<dbReference type="InterPro" id="IPR041663">
    <property type="entry name" value="DisA/LigA_HHH"/>
</dbReference>
<dbReference type="InterPro" id="IPR001679">
    <property type="entry name" value="DNA_ligase"/>
</dbReference>
<dbReference type="InterPro" id="IPR033136">
    <property type="entry name" value="DNA_ligase_CS"/>
</dbReference>
<dbReference type="InterPro" id="IPR013839">
    <property type="entry name" value="DNAligase_adenylation"/>
</dbReference>
<dbReference type="InterPro" id="IPR013840">
    <property type="entry name" value="DNAligase_N"/>
</dbReference>
<dbReference type="InterPro" id="IPR003583">
    <property type="entry name" value="Hlx-hairpin-Hlx_DNA-bd_motif"/>
</dbReference>
<dbReference type="InterPro" id="IPR012340">
    <property type="entry name" value="NA-bd_OB-fold"/>
</dbReference>
<dbReference type="InterPro" id="IPR004150">
    <property type="entry name" value="NAD_DNA_ligase_OB"/>
</dbReference>
<dbReference type="InterPro" id="IPR010994">
    <property type="entry name" value="RuvA_2-like"/>
</dbReference>
<dbReference type="NCBIfam" id="TIGR00575">
    <property type="entry name" value="dnlj"/>
    <property type="match status" value="1"/>
</dbReference>
<dbReference type="NCBIfam" id="NF005932">
    <property type="entry name" value="PRK07956.1"/>
    <property type="match status" value="1"/>
</dbReference>
<dbReference type="PANTHER" id="PTHR23389">
    <property type="entry name" value="CHROMOSOME TRANSMISSION FIDELITY FACTOR 18"/>
    <property type="match status" value="1"/>
</dbReference>
<dbReference type="PANTHER" id="PTHR23389:SF9">
    <property type="entry name" value="DNA LIGASE"/>
    <property type="match status" value="1"/>
</dbReference>
<dbReference type="Pfam" id="PF00533">
    <property type="entry name" value="BRCT"/>
    <property type="match status" value="1"/>
</dbReference>
<dbReference type="Pfam" id="PF01653">
    <property type="entry name" value="DNA_ligase_aden"/>
    <property type="match status" value="1"/>
</dbReference>
<dbReference type="Pfam" id="PF03120">
    <property type="entry name" value="DNA_ligase_OB"/>
    <property type="match status" value="1"/>
</dbReference>
<dbReference type="Pfam" id="PF12826">
    <property type="entry name" value="HHH_2"/>
    <property type="match status" value="1"/>
</dbReference>
<dbReference type="PIRSF" id="PIRSF001604">
    <property type="entry name" value="LigA"/>
    <property type="match status" value="1"/>
</dbReference>
<dbReference type="SMART" id="SM00292">
    <property type="entry name" value="BRCT"/>
    <property type="match status" value="1"/>
</dbReference>
<dbReference type="SMART" id="SM00278">
    <property type="entry name" value="HhH1"/>
    <property type="match status" value="4"/>
</dbReference>
<dbReference type="SMART" id="SM00532">
    <property type="entry name" value="LIGANc"/>
    <property type="match status" value="1"/>
</dbReference>
<dbReference type="SUPFAM" id="SSF52113">
    <property type="entry name" value="BRCT domain"/>
    <property type="match status" value="1"/>
</dbReference>
<dbReference type="SUPFAM" id="SSF56091">
    <property type="entry name" value="DNA ligase/mRNA capping enzyme, catalytic domain"/>
    <property type="match status" value="1"/>
</dbReference>
<dbReference type="SUPFAM" id="SSF50249">
    <property type="entry name" value="Nucleic acid-binding proteins"/>
    <property type="match status" value="1"/>
</dbReference>
<dbReference type="SUPFAM" id="SSF47781">
    <property type="entry name" value="RuvA domain 2-like"/>
    <property type="match status" value="1"/>
</dbReference>
<dbReference type="PROSITE" id="PS50172">
    <property type="entry name" value="BRCT"/>
    <property type="match status" value="1"/>
</dbReference>
<dbReference type="PROSITE" id="PS01056">
    <property type="entry name" value="DNA_LIGASE_N2"/>
    <property type="match status" value="1"/>
</dbReference>
<comment type="function">
    <text evidence="1">DNA ligase that catalyzes the formation of phosphodiester linkages between 5'-phosphoryl and 3'-hydroxyl groups in double-stranded DNA using NAD as a coenzyme and as the energy source for the reaction. It is essential for DNA replication and repair of damaged DNA.</text>
</comment>
<comment type="catalytic activity">
    <reaction evidence="1">
        <text>NAD(+) + (deoxyribonucleotide)n-3'-hydroxyl + 5'-phospho-(deoxyribonucleotide)m = (deoxyribonucleotide)n+m + AMP + beta-nicotinamide D-nucleotide.</text>
        <dbReference type="EC" id="6.5.1.2"/>
    </reaction>
</comment>
<comment type="cofactor">
    <cofactor evidence="1">
        <name>Mg(2+)</name>
        <dbReference type="ChEBI" id="CHEBI:18420"/>
    </cofactor>
    <cofactor evidence="1">
        <name>Mn(2+)</name>
        <dbReference type="ChEBI" id="CHEBI:29035"/>
    </cofactor>
</comment>
<comment type="similarity">
    <text evidence="1">Belongs to the NAD-dependent DNA ligase family. LigA subfamily.</text>
</comment>
<sequence length="664" mass="75818">MDNKLEKMKKLVEELNQYAYEYYVLDNPSISDKEYDLKYDELVILEKETQVTLPYSPTQRVGDKILGEFSKYTHKGRLWSLDKAQNMEQLIEWHNRNLKVIEQYNSMSEDKLPELRYIVTKKFDGLTVNCTYDENGILIKSATRGTGIIGEDITAQIKTIKTVPLKIKNNHVIEVHGEAIMTKTAFEEYNKAAQVPLKNLRNGAAGALRNLDIKETARRNLSAFFYDVGYNEGPEFKSYREMMNFIRNMGLPQDKYIKECTNMEEVEKEIEYIESIREELDYDIDGAVIVVDDIKTREILGYTIKFPKWAIAYKFEAKEITTKLLDVEWNVGRSGRVTPTALLEPVELGGVTVKRATLNNMDDIKRKNVKLGAKVLVRRSNDVIPEIMGVVEESLEESKEIQAPDRCPYCNSHLVQNGVHYYCENTLSCKPQMVKSIVHFASREAMNIAGFSGKTAEQLFERLDIKSISDLYKIRKEELLTLDKFGDKKSQNLIDAIENSKNCDLASFIYALGIPNVGKKTANDLVMKFKTLESIKNTTIEQLVEVPDVGEIVAKSIYDFFEDEKIISNIEELLNLGVKPYYEEERIDENPFMGKTIVVTGSLNNYSRGEIKDKLQSLGAKVSSSVSKNTDYVLVGEKPGSKYEKAIELGVKVINEEEFSNKIK</sequence>
<gene>
    <name evidence="1" type="primary">ligA</name>
    <name type="ordered locus">CLJ_B3551</name>
</gene>
<name>DNLJ_CLOB6</name>
<evidence type="ECO:0000255" key="1">
    <source>
        <dbReference type="HAMAP-Rule" id="MF_01588"/>
    </source>
</evidence>
<feature type="chain" id="PRO_0000380339" description="DNA ligase">
    <location>
        <begin position="1"/>
        <end position="664"/>
    </location>
</feature>
<feature type="domain" description="BRCT" evidence="1">
    <location>
        <begin position="587"/>
        <end position="664"/>
    </location>
</feature>
<feature type="active site" description="N6-AMP-lysine intermediate" evidence="1">
    <location>
        <position position="122"/>
    </location>
</feature>
<feature type="binding site" evidence="1">
    <location>
        <begin position="32"/>
        <end position="36"/>
    </location>
    <ligand>
        <name>NAD(+)</name>
        <dbReference type="ChEBI" id="CHEBI:57540"/>
    </ligand>
</feature>
<feature type="binding site" evidence="1">
    <location>
        <begin position="80"/>
        <end position="81"/>
    </location>
    <ligand>
        <name>NAD(+)</name>
        <dbReference type="ChEBI" id="CHEBI:57540"/>
    </ligand>
</feature>
<feature type="binding site" evidence="1">
    <location>
        <position position="144"/>
    </location>
    <ligand>
        <name>NAD(+)</name>
        <dbReference type="ChEBI" id="CHEBI:57540"/>
    </ligand>
</feature>
<feature type="binding site" evidence="1">
    <location>
        <position position="178"/>
    </location>
    <ligand>
        <name>NAD(+)</name>
        <dbReference type="ChEBI" id="CHEBI:57540"/>
    </ligand>
</feature>
<feature type="binding site" evidence="1">
    <location>
        <position position="314"/>
    </location>
    <ligand>
        <name>NAD(+)</name>
        <dbReference type="ChEBI" id="CHEBI:57540"/>
    </ligand>
</feature>
<feature type="binding site" evidence="1">
    <location>
        <position position="407"/>
    </location>
    <ligand>
        <name>Zn(2+)</name>
        <dbReference type="ChEBI" id="CHEBI:29105"/>
    </ligand>
</feature>
<feature type="binding site" evidence="1">
    <location>
        <position position="410"/>
    </location>
    <ligand>
        <name>Zn(2+)</name>
        <dbReference type="ChEBI" id="CHEBI:29105"/>
    </ligand>
</feature>
<feature type="binding site" evidence="1">
    <location>
        <position position="423"/>
    </location>
    <ligand>
        <name>Zn(2+)</name>
        <dbReference type="ChEBI" id="CHEBI:29105"/>
    </ligand>
</feature>
<feature type="binding site" evidence="1">
    <location>
        <position position="429"/>
    </location>
    <ligand>
        <name>Zn(2+)</name>
        <dbReference type="ChEBI" id="CHEBI:29105"/>
    </ligand>
</feature>
<reference key="1">
    <citation type="submission" date="2008-05" db="EMBL/GenBank/DDBJ databases">
        <title>Genome sequence of Clostridium botulinum Ba4 strain 657.</title>
        <authorList>
            <person name="Shrivastava S."/>
            <person name="Brown J.L."/>
            <person name="Bruce D."/>
            <person name="Detter C."/>
            <person name="Munk C."/>
            <person name="Smith L.A."/>
            <person name="Smith T.J."/>
            <person name="Sutton G."/>
            <person name="Brettin T.S."/>
        </authorList>
    </citation>
    <scope>NUCLEOTIDE SEQUENCE [LARGE SCALE GENOMIC DNA]</scope>
    <source>
        <strain>657 / Type Ba4</strain>
    </source>
</reference>